<name>TRUB_STRAW</name>
<reference key="1">
    <citation type="journal article" date="2001" name="Proc. Natl. Acad. Sci. U.S.A.">
        <title>Genome sequence of an industrial microorganism Streptomyces avermitilis: deducing the ability of producing secondary metabolites.</title>
        <authorList>
            <person name="Omura S."/>
            <person name="Ikeda H."/>
            <person name="Ishikawa J."/>
            <person name="Hanamoto A."/>
            <person name="Takahashi C."/>
            <person name="Shinose M."/>
            <person name="Takahashi Y."/>
            <person name="Horikawa H."/>
            <person name="Nakazawa H."/>
            <person name="Osonoe T."/>
            <person name="Kikuchi H."/>
            <person name="Shiba T."/>
            <person name="Sakaki Y."/>
            <person name="Hattori M."/>
        </authorList>
    </citation>
    <scope>NUCLEOTIDE SEQUENCE [LARGE SCALE GENOMIC DNA]</scope>
    <source>
        <strain>ATCC 31267 / DSM 46492 / JCM 5070 / NBRC 14893 / NCIMB 12804 / NRRL 8165 / MA-4680</strain>
    </source>
</reference>
<reference key="2">
    <citation type="journal article" date="2003" name="Nat. Biotechnol.">
        <title>Complete genome sequence and comparative analysis of the industrial microorganism Streptomyces avermitilis.</title>
        <authorList>
            <person name="Ikeda H."/>
            <person name="Ishikawa J."/>
            <person name="Hanamoto A."/>
            <person name="Shinose M."/>
            <person name="Kikuchi H."/>
            <person name="Shiba T."/>
            <person name="Sakaki Y."/>
            <person name="Hattori M."/>
            <person name="Omura S."/>
        </authorList>
    </citation>
    <scope>NUCLEOTIDE SEQUENCE [LARGE SCALE GENOMIC DNA]</scope>
    <source>
        <strain>ATCC 31267 / DSM 46492 / JCM 5070 / NBRC 14893 / NCIMB 12804 / NRRL 8165 / MA-4680</strain>
    </source>
</reference>
<accession>Q82K56</accession>
<gene>
    <name evidence="1" type="primary">truB</name>
    <name type="ordered locus">SAV_2548</name>
</gene>
<sequence length="301" mass="32112">MTEKHRTPDGLVIVDKPSGFTSHDVVAKMRGIARTRRVGHAGTLDPMATGVLVLGVEKATKLLGHLALTEKEYLGTIRLGQNTLTDDAEGEIISSTDASRVTRDAIDAGVAKLSGAIMQVPSKVSAIKIDGVRSYKRAREGEDFEIPARPVTVSSFAVYDVRDAVAEDGTPVLDLVVSVVCSSGTYIRALARDLGADLGVGGHLTALRRTRVGPYKLDAARTLDQLQEELTVMPIAEAAAAAFPRWDVDTKRARLLLNGVRLEMPEEYAGRGAVAVVDPAGRFLALVEEQKGKAKSLAVFG</sequence>
<comment type="function">
    <text evidence="1">Responsible for synthesis of pseudouridine from uracil-55 in the psi GC loop of transfer RNAs.</text>
</comment>
<comment type="catalytic activity">
    <reaction evidence="1">
        <text>uridine(55) in tRNA = pseudouridine(55) in tRNA</text>
        <dbReference type="Rhea" id="RHEA:42532"/>
        <dbReference type="Rhea" id="RHEA-COMP:10101"/>
        <dbReference type="Rhea" id="RHEA-COMP:10102"/>
        <dbReference type="ChEBI" id="CHEBI:65314"/>
        <dbReference type="ChEBI" id="CHEBI:65315"/>
        <dbReference type="EC" id="5.4.99.25"/>
    </reaction>
</comment>
<comment type="similarity">
    <text evidence="1">Belongs to the pseudouridine synthase TruB family. Type 1 subfamily.</text>
</comment>
<feature type="chain" id="PRO_0000121912" description="tRNA pseudouridine synthase B">
    <location>
        <begin position="1"/>
        <end position="301"/>
    </location>
</feature>
<feature type="active site" description="Nucleophile" evidence="1">
    <location>
        <position position="45"/>
    </location>
</feature>
<evidence type="ECO:0000255" key="1">
    <source>
        <dbReference type="HAMAP-Rule" id="MF_01080"/>
    </source>
</evidence>
<organism>
    <name type="scientific">Streptomyces avermitilis (strain ATCC 31267 / DSM 46492 / JCM 5070 / NBRC 14893 / NCIMB 12804 / NRRL 8165 / MA-4680)</name>
    <dbReference type="NCBI Taxonomy" id="227882"/>
    <lineage>
        <taxon>Bacteria</taxon>
        <taxon>Bacillati</taxon>
        <taxon>Actinomycetota</taxon>
        <taxon>Actinomycetes</taxon>
        <taxon>Kitasatosporales</taxon>
        <taxon>Streptomycetaceae</taxon>
        <taxon>Streptomyces</taxon>
    </lineage>
</organism>
<protein>
    <recommendedName>
        <fullName evidence="1">tRNA pseudouridine synthase B</fullName>
        <ecNumber evidence="1">5.4.99.25</ecNumber>
    </recommendedName>
    <alternativeName>
        <fullName evidence="1">tRNA pseudouridine(55) synthase</fullName>
        <shortName evidence="1">Psi55 synthase</shortName>
    </alternativeName>
    <alternativeName>
        <fullName evidence="1">tRNA pseudouridylate synthase</fullName>
    </alternativeName>
    <alternativeName>
        <fullName evidence="1">tRNA-uridine isomerase</fullName>
    </alternativeName>
</protein>
<proteinExistence type="inferred from homology"/>
<keyword id="KW-0413">Isomerase</keyword>
<keyword id="KW-1185">Reference proteome</keyword>
<keyword id="KW-0819">tRNA processing</keyword>
<dbReference type="EC" id="5.4.99.25" evidence="1"/>
<dbReference type="EMBL" id="BA000030">
    <property type="protein sequence ID" value="BAC70259.1"/>
    <property type="molecule type" value="Genomic_DNA"/>
</dbReference>
<dbReference type="RefSeq" id="WP_010983984.1">
    <property type="nucleotide sequence ID" value="NZ_JZJK01000064.1"/>
</dbReference>
<dbReference type="SMR" id="Q82K56"/>
<dbReference type="GeneID" id="41539636"/>
<dbReference type="KEGG" id="sma:SAVERM_2548"/>
<dbReference type="eggNOG" id="COG0130">
    <property type="taxonomic scope" value="Bacteria"/>
</dbReference>
<dbReference type="HOGENOM" id="CLU_032087_0_0_11"/>
<dbReference type="OrthoDB" id="9802309at2"/>
<dbReference type="Proteomes" id="UP000000428">
    <property type="component" value="Chromosome"/>
</dbReference>
<dbReference type="GO" id="GO:0003723">
    <property type="term" value="F:RNA binding"/>
    <property type="evidence" value="ECO:0007669"/>
    <property type="project" value="InterPro"/>
</dbReference>
<dbReference type="GO" id="GO:0160148">
    <property type="term" value="F:tRNA pseudouridine(55) synthase activity"/>
    <property type="evidence" value="ECO:0007669"/>
    <property type="project" value="UniProtKB-EC"/>
</dbReference>
<dbReference type="GO" id="GO:1990481">
    <property type="term" value="P:mRNA pseudouridine synthesis"/>
    <property type="evidence" value="ECO:0007669"/>
    <property type="project" value="TreeGrafter"/>
</dbReference>
<dbReference type="GO" id="GO:0031119">
    <property type="term" value="P:tRNA pseudouridine synthesis"/>
    <property type="evidence" value="ECO:0007669"/>
    <property type="project" value="UniProtKB-UniRule"/>
</dbReference>
<dbReference type="CDD" id="cd02573">
    <property type="entry name" value="PseudoU_synth_EcTruB"/>
    <property type="match status" value="1"/>
</dbReference>
<dbReference type="FunFam" id="3.30.2350.10:FF:000011">
    <property type="entry name" value="tRNA pseudouridine synthase B"/>
    <property type="match status" value="1"/>
</dbReference>
<dbReference type="Gene3D" id="3.30.2350.10">
    <property type="entry name" value="Pseudouridine synthase"/>
    <property type="match status" value="1"/>
</dbReference>
<dbReference type="Gene3D" id="2.30.130.10">
    <property type="entry name" value="PUA domain"/>
    <property type="match status" value="1"/>
</dbReference>
<dbReference type="HAMAP" id="MF_01080">
    <property type="entry name" value="TruB_bact"/>
    <property type="match status" value="1"/>
</dbReference>
<dbReference type="InterPro" id="IPR020103">
    <property type="entry name" value="PsdUridine_synth_cat_dom_sf"/>
</dbReference>
<dbReference type="InterPro" id="IPR002501">
    <property type="entry name" value="PsdUridine_synth_N"/>
</dbReference>
<dbReference type="InterPro" id="IPR015947">
    <property type="entry name" value="PUA-like_sf"/>
</dbReference>
<dbReference type="InterPro" id="IPR036974">
    <property type="entry name" value="PUA_sf"/>
</dbReference>
<dbReference type="InterPro" id="IPR015225">
    <property type="entry name" value="tRNA_psdUridine_synth_fam2_C"/>
</dbReference>
<dbReference type="InterPro" id="IPR014780">
    <property type="entry name" value="tRNA_psdUridine_synth_TruB"/>
</dbReference>
<dbReference type="InterPro" id="IPR032819">
    <property type="entry name" value="TruB_C"/>
</dbReference>
<dbReference type="NCBIfam" id="TIGR00431">
    <property type="entry name" value="TruB"/>
    <property type="match status" value="1"/>
</dbReference>
<dbReference type="PANTHER" id="PTHR13767:SF2">
    <property type="entry name" value="PSEUDOURIDYLATE SYNTHASE TRUB1"/>
    <property type="match status" value="1"/>
</dbReference>
<dbReference type="PANTHER" id="PTHR13767">
    <property type="entry name" value="TRNA-PSEUDOURIDINE SYNTHASE"/>
    <property type="match status" value="1"/>
</dbReference>
<dbReference type="Pfam" id="PF09142">
    <property type="entry name" value="TruB_C"/>
    <property type="match status" value="1"/>
</dbReference>
<dbReference type="Pfam" id="PF16198">
    <property type="entry name" value="TruB_C_2"/>
    <property type="match status" value="1"/>
</dbReference>
<dbReference type="Pfam" id="PF01509">
    <property type="entry name" value="TruB_N"/>
    <property type="match status" value="1"/>
</dbReference>
<dbReference type="SUPFAM" id="SSF55120">
    <property type="entry name" value="Pseudouridine synthase"/>
    <property type="match status" value="1"/>
</dbReference>
<dbReference type="SUPFAM" id="SSF88697">
    <property type="entry name" value="PUA domain-like"/>
    <property type="match status" value="1"/>
</dbReference>